<protein>
    <recommendedName>
        <fullName evidence="13">Nosiheptide precursor</fullName>
    </recommendedName>
    <component>
        <recommendedName>
            <fullName evidence="13">Nosiheptide</fullName>
            <shortName evidence="13">NOS</shortName>
        </recommendedName>
        <alternativeName>
            <fullName evidence="16">Antibiotic 9671-RP</fullName>
        </alternativeName>
        <alternativeName>
            <fullName evidence="15">Multhiomycin</fullName>
        </alternativeName>
    </component>
</protein>
<proteinExistence type="evidence at protein level"/>
<organism>
    <name type="scientific">Streptomyces actuosus</name>
    <dbReference type="NCBI Taxonomy" id="1885"/>
    <lineage>
        <taxon>Bacteria</taxon>
        <taxon>Bacillati</taxon>
        <taxon>Actinomycetota</taxon>
        <taxon>Actinomycetes</taxon>
        <taxon>Kitasatosporales</taxon>
        <taxon>Streptomycetaceae</taxon>
        <taxon>Streptomyces</taxon>
    </lineage>
</organism>
<reference evidence="17 18" key="1">
    <citation type="journal article" date="2009" name="ACS Chem. Biol.">
        <title>Nosiheptide biosynthesis featuring a unique indole side ring formation on the characteristic thiopeptide framework.</title>
        <authorList>
            <person name="Yu Y."/>
            <person name="Duan L."/>
            <person name="Zhang Q."/>
            <person name="Liao R."/>
            <person name="Ding Y."/>
            <person name="Pan H."/>
            <person name="Wendt-Pienkowski E."/>
            <person name="Tang G."/>
            <person name="Shen B."/>
            <person name="Liu W."/>
        </authorList>
    </citation>
    <scope>NUCLEOTIDE SEQUENCE [GENOMIC DNA]</scope>
    <scope>HYDROXYLATION AT GLU-43</scope>
    <scope>MASS SPECTROMETRY</scope>
    <source>
        <strain evidence="5">ATCC 25421 / DSM 40337 / JCM 4445 / NBRC 13009 / NRRL 2954 / VKM Ac-1274</strain>
    </source>
</reference>
<reference evidence="17" key="2">
    <citation type="journal article" date="1980" name="Experientia">
        <title>Nosiheptide, a sulfur-containing peptide antibiotic isolated from Streptomyces actuosus 40037.</title>
        <authorList>
            <person name="Benazet F."/>
            <person name="Cartier M."/>
            <person name="Florent J."/>
            <person name="Godard C."/>
            <person name="Jung G."/>
            <person name="Lunel J."/>
            <person name="Mancy D."/>
            <person name="Pascal C."/>
            <person name="Renaut J."/>
            <person name="Tarridec P."/>
            <person name="Theilleux J."/>
            <person name="Tissier R."/>
            <person name="Dubost M."/>
            <person name="Ninet L."/>
        </authorList>
    </citation>
    <scope>FUNCTION</scope>
    <source>
        <strain evidence="11">ATCC 25421 / DSM 40337 / JCM 4445 / NBRC 13009 / NRRL 2954 / VKM Ac-1274</strain>
    </source>
</reference>
<reference evidence="17" key="3">
    <citation type="journal article" date="1981" name="J. Gen. Microbiol.">
        <title>The mode of action of nosiheptide (multhiomycin) and the mechanism of resistance in the producing organism.</title>
        <authorList>
            <person name="Cundliffe E."/>
            <person name="Thompson J."/>
        </authorList>
    </citation>
    <scope>FUNCTION</scope>
    <source>
        <strain evidence="10">ATCC 25421 / DSM 40337 / JCM 4445 / NBRC 13009 / NRRL 2954 / VKM Ac-1274</strain>
    </source>
</reference>
<reference evidence="17" key="4">
    <citation type="journal article" date="2003" name="Chem. Biol.">
        <title>Structural basis for contrasting activities of ribosome binding thiazole antibiotics.</title>
        <authorList>
            <person name="Lentzen G."/>
            <person name="Klinck R."/>
            <person name="Matassova N."/>
            <person name="Aboul-ela F."/>
            <person name="Murchie A.I."/>
        </authorList>
    </citation>
    <scope>FUNCTION</scope>
</reference>
<reference evidence="17" key="5">
    <citation type="journal article" date="2008" name="J. Am. Chem. Soc.">
        <title>Mapping the binding site of thiopeptide antibiotics by proximity-induced covalent capture.</title>
        <authorList>
            <person name="Baumann S."/>
            <person name="Schoof S."/>
            <person name="Harkal S.D."/>
            <person name="Arndt H.D."/>
        </authorList>
    </citation>
    <scope>FUNCTION</scope>
</reference>
<reference evidence="17" key="6">
    <citation type="journal article" date="2010" name="J. Am. Chem. Soc.">
        <title>Molecular determinants of microbial resistance to thiopeptide antibiotics.</title>
        <authorList>
            <person name="Baumann S."/>
            <person name="Schoof S."/>
            <person name="Bolten M."/>
            <person name="Haering C."/>
            <person name="Takagi M."/>
            <person name="Shin-ya K."/>
            <person name="Arndt H.D."/>
        </authorList>
    </citation>
    <scope>FUNCTION</scope>
</reference>
<reference evidence="17" key="7">
    <citation type="journal article" date="2011" name="J. Vet. Med. Sci.">
        <title>Antimicrobial susceptibilities of Listeria monocytogenes isolated in Japan.</title>
        <authorList>
            <person name="Okada Y."/>
            <person name="Okutani A."/>
            <person name="Suzuki H."/>
            <person name="Asakura H."/>
            <person name="Monden S."/>
            <person name="Nakama A."/>
            <person name="Maruyama T."/>
            <person name="Igimi S."/>
        </authorList>
    </citation>
    <scope>FUNCTION</scope>
</reference>
<reference evidence="17" key="8">
    <citation type="journal article" date="2010" name="J. Am. Chem. Soc.">
        <title>NosA catalyzing carboxyl-terminal amide formation in nosiheptide maturation via an enamine dealkylation on the serine-extended precursor peptide.</title>
        <authorList>
            <person name="Yu Y."/>
            <person name="Guo H."/>
            <person name="Zhang Q."/>
            <person name="Duan L."/>
            <person name="Ding Y."/>
            <person name="Liao R."/>
            <person name="Lei C."/>
            <person name="Shen B."/>
            <person name="Liu W."/>
        </authorList>
    </citation>
    <scope>MASS SPECTROMETRY</scope>
    <scope>AMIDATION AT SER-49</scope>
    <source>
        <strain evidence="7">ATCC 25421 / DSM 40337 / JCM 4445 / NBRC 13009 / NRRL 2954 / VKM Ac-1274</strain>
    </source>
</reference>
<reference evidence="17" key="9">
    <citation type="journal article" date="1977" name="J. Am. Chem. Soc.">
        <title>Highly modified cysteine-containing antibiotics. Chemical structure and configuration of nosiheptide.</title>
        <authorList>
            <person name="Pascard C."/>
            <person name="Ducruix A."/>
            <person name="Lunel J."/>
            <person name="Prange T."/>
        </authorList>
    </citation>
    <scope>X-RAY CRYSTALLOGRAPHY OF 38-49</scope>
    <scope>DEHYDRATION AT SER-49</scope>
</reference>
<reference evidence="17" key="10">
    <citation type="journal article" date="1989" name="J. Antibiot.">
        <title>1H and 13C NMR assignments of the thiopeptide antibiotic nosiheptide.</title>
        <authorList>
            <person name="Mocek U."/>
            <person name="Chen L.C."/>
            <person name="Keller P.J."/>
            <person name="Houck D.R."/>
            <person name="Beale J.M."/>
            <person name="Floss H.G."/>
        </authorList>
    </citation>
    <scope>STRUCTURE BY NMR</scope>
    <scope>DEHYDRATION AT SER-49</scope>
</reference>
<reference evidence="17" key="11">
    <citation type="journal article" date="2008" name="Mol. Cell">
        <title>Translational regulation via L11: molecular switches on the ribosome turned on and off by thiostrepton and micrococcin.</title>
        <authorList>
            <person name="Harms J.M."/>
            <person name="Wilson D.N."/>
            <person name="Schluenzen F."/>
            <person name="Connell S.R."/>
            <person name="Stachelhaus T."/>
            <person name="Zaborowska Z."/>
            <person name="Spahn C.M."/>
            <person name="Fucini P."/>
        </authorList>
    </citation>
    <scope>X-RAY CRYSTALLOGRAPHY (3.7 ANGSTROMS) OF 38-49</scope>
    <scope>DEHYDRATION AT SER-49</scope>
</reference>
<keyword id="KW-0002">3D-structure</keyword>
<keyword id="KW-0027">Amidation</keyword>
<keyword id="KW-0044">Antibiotic</keyword>
<keyword id="KW-0929">Antimicrobial</keyword>
<keyword id="KW-0379">Hydroxylation</keyword>
<keyword id="KW-0883">Thioether bond</keyword>
<sequence>MDAAHLSDLDIDALEISEFLDESRLEDSEVVAKVMSASCTTCECCCSCSS</sequence>
<accession>C6FX52</accession>
<gene>
    <name evidence="18" type="primary">nosM</name>
</gene>
<name>NOSM_STRAS</name>
<dbReference type="EMBL" id="FJ438820">
    <property type="protein sequence ID" value="ACR48342.1"/>
    <property type="molecule type" value="Genomic_DNA"/>
</dbReference>
<dbReference type="PDB" id="2ZJP">
    <property type="method" value="X-ray"/>
    <property type="resolution" value="3.70 A"/>
    <property type="chains" value="5=38-50"/>
</dbReference>
<dbReference type="PDBsum" id="2ZJP"/>
<dbReference type="SMR" id="C6FX52"/>
<dbReference type="GO" id="GO:0070180">
    <property type="term" value="F:large ribosomal subunit rRNA binding"/>
    <property type="evidence" value="ECO:0000314"/>
    <property type="project" value="UniProtKB"/>
</dbReference>
<dbReference type="GO" id="GO:0050829">
    <property type="term" value="P:defense response to Gram-negative bacterium"/>
    <property type="evidence" value="ECO:0000314"/>
    <property type="project" value="UniProtKB"/>
</dbReference>
<dbReference type="GO" id="GO:0050830">
    <property type="term" value="P:defense response to Gram-positive bacterium"/>
    <property type="evidence" value="ECO:0000314"/>
    <property type="project" value="UniProtKB"/>
</dbReference>
<dbReference type="GO" id="GO:0045900">
    <property type="term" value="P:negative regulation of translational elongation"/>
    <property type="evidence" value="ECO:0000314"/>
    <property type="project" value="UniProtKB"/>
</dbReference>
<dbReference type="InterPro" id="IPR023895">
    <property type="entry name" value="Thiopep_bacteriocin_prcur"/>
</dbReference>
<dbReference type="NCBIfam" id="NF033401">
    <property type="entry name" value="thiazolyl_BerA"/>
    <property type="match status" value="1"/>
</dbReference>
<dbReference type="NCBIfam" id="TIGR03892">
    <property type="entry name" value="thiopep_precurs"/>
    <property type="match status" value="1"/>
</dbReference>
<evidence type="ECO:0000255" key="1"/>
<evidence type="ECO:0000269" key="2">
    <source>
    </source>
</evidence>
<evidence type="ECO:0000269" key="3">
    <source>
    </source>
</evidence>
<evidence type="ECO:0000269" key="4">
    <source>
    </source>
</evidence>
<evidence type="ECO:0000269" key="5">
    <source>
    </source>
</evidence>
<evidence type="ECO:0000269" key="6">
    <source>
    </source>
</evidence>
<evidence type="ECO:0000269" key="7">
    <source>
    </source>
</evidence>
<evidence type="ECO:0000269" key="8">
    <source>
    </source>
</evidence>
<evidence type="ECO:0000269" key="9">
    <source>
    </source>
</evidence>
<evidence type="ECO:0000269" key="10">
    <source>
    </source>
</evidence>
<evidence type="ECO:0000269" key="11">
    <source>
    </source>
</evidence>
<evidence type="ECO:0000269" key="12">
    <source>
    </source>
</evidence>
<evidence type="ECO:0000303" key="13">
    <source>
    </source>
</evidence>
<evidence type="ECO:0000303" key="14">
    <source>
    </source>
</evidence>
<evidence type="ECO:0000303" key="15">
    <source>
    </source>
</evidence>
<evidence type="ECO:0000303" key="16">
    <source>
    </source>
</evidence>
<evidence type="ECO:0000305" key="17"/>
<evidence type="ECO:0000312" key="18">
    <source>
        <dbReference type="EMBL" id="ACR48342.1"/>
    </source>
</evidence>
<feature type="chain" id="PRO_0000414621" description="Nosiheptide precursor">
    <location>
        <begin position="1"/>
        <end position="50"/>
    </location>
</feature>
<feature type="peptide" id="PRO_0000414622" description="Nosiheptide" evidence="5">
    <location>
        <begin position="38"/>
        <end position="49"/>
    </location>
</feature>
<feature type="modified residue" description="4-hydroxyglutamate" evidence="4 5 9 12">
    <location>
        <position position="43"/>
    </location>
</feature>
<feature type="modified residue" description="2,3-didehydroalanine (Ser)" evidence="4 9 12">
    <location>
        <position position="49"/>
    </location>
</feature>
<feature type="modified residue" description="Serine amide; atypical" evidence="4 7 9 12">
    <location>
        <position position="49"/>
    </location>
</feature>
<feature type="cross-link" description="3-hydroxypyridine-2,5-dicarboxylic acid (Ser-Ser) (with C-46)" evidence="4 9 12">
    <location>
        <begin position="38"/>
        <end position="47"/>
    </location>
</feature>
<feature type="cross-link" description="3-hydroxypyridine-2,5-dicarboxylic acid (Ser-Cys) (with S-47)" evidence="4 9 12">
    <location>
        <begin position="38"/>
        <end position="46"/>
    </location>
</feature>
<feature type="cross-link" description="Thiazole-4-carboxylic acid (Ser-Cys)" evidence="4 9 12">
    <location>
        <begin position="38"/>
        <end position="39"/>
    </location>
</feature>
<feature type="cross-link" description="Thiazole-4-carboxylic acid (Thr-Cys)" evidence="4 9 12">
    <location>
        <begin position="41"/>
        <end position="42"/>
    </location>
</feature>
<feature type="cross-link" description="2-(cystein-S-ylcarbonyl)-3-methyl-4-(glutam-5-yloxy)methylindole (Glu-Cys)" evidence="4 9 12">
    <location>
        <begin position="43"/>
        <end position="45"/>
    </location>
</feature>
<feature type="cross-link" description="Thiazole-4-carboxylic acid (Glu-Cys)" evidence="4 9 12">
    <location>
        <begin position="43"/>
        <end position="44"/>
    </location>
</feature>
<feature type="cross-link" description="Thiazole-4-carboxylic acid (Cys-Cys)" evidence="4 9 12">
    <location>
        <begin position="45"/>
        <end position="46"/>
    </location>
</feature>
<feature type="cross-link" description="Thiazole-4-carboxylic acid (Ser-Cys)" evidence="4 9 12">
    <location>
        <begin position="47"/>
        <end position="48"/>
    </location>
</feature>
<comment type="function">
    <text evidence="2 3 4 6 8 10 11">Inhibits bacterial protein biosynthesis by binding to ribosomes. Specifically, binds to the complex of 23S rRNA and ribosomal protein L11 (RPLK) in the 50S ribosomal subunit. While allowing a weak binding of elongation factor G (EF-G) to the ribosome and subsequent GTP-hydrolysis, probably impairs conformational changes in both the ribosome and EF-G which are necessary for translocation. In vitro, inhibits Gram-positive bacteria S.aureus strain 209P (MIC=0.0009 ug/ml), S.aureus strain 133 (MIC=0.0019 ug/ml), S.aureus strain B3 (MIC=0.003 ug/ml), S.aureus strain Hb (MIC=0.003 ug/ml), M.citreus strain ATCC 8411 (MIC=0.0038 ug/ml), M.lysodeikticus strain ATCC 4698 (MIC=0.003 ug/ml), S.lutea strain ATCC 9341 (MIC=0.0011 ug/ml), S.faecalis strain ATCC 9790 (MIC=0.0007 ug/ml), S.viridans (MIC=0.0065 ug/ml), S.pyogenes hemolyticus strain Dig7 (MIC=0.00028 ug/ml), D.pneumoniae strain Til (MIC=0.00015 ug/ml), N.catrrhalis (MIC=0.0017 ug/ml), L.casei strain ATCC 6633 (MIC=0.003 ug/ml), B.cereus strain ATCC 6630 (MIC=0.0071 ug/ml) and various isolates of L.monocytogenes. In vitro, inhibits Gram-negative bacterium P.multocida strain A125 (MIC=0.0024 ug/ml) but not M.smegmatis strain ATCC 6630, S.typhimurium, A.aerogenes strain ATCC 8308, P.vulgaris, K.pneumoniae strain ATCC 10031, S.marcescens strain A476, P.aeruginosa strain Bass or B.bronchiseptica strain CN387. Does not inhibit Gram-negative bacterium E.coli strain ATCC 9637 but does inhibit purified ribosomes from E.coli. In vivo, has no systemic effect in mice infected with staphylococci or streptococci when applied orally or subcutaneously. Has a local effect in mice infected subcutaneously or intraperitoneally with staphylococci when applied immediately afterwards. Is not toxic to mice.</text>
</comment>
<comment type="PTM">
    <text evidence="7">The amidation of Ser-49 is produced by the oxidative cleavage of Ser-50 rather than of a glycine, as in eukaryotes.</text>
</comment>
<comment type="mass spectrometry">
    <molecule>Nosiheptide</molecule>
</comment>
<comment type="mass spectrometry">
    <molecule>Nosiheptide</molecule>
</comment>
<comment type="miscellaneous">
    <text evidence="17">The mature peptide is identical to multhiomycin from S.antibioticus strain 8446CC1 (PMID 681244).</text>
</comment>
<comment type="miscellaneous">
    <text evidence="14">Used as an antibiotic growth promotant in poultry and pig farming in parts of Asia.</text>
</comment>
<comment type="similarity">
    <text evidence="1">Belongs to the thiocillin family.</text>
</comment>